<dbReference type="EC" id="3.2.2.27"/>
<dbReference type="EMBL" id="LT708304">
    <property type="protein sequence ID" value="SIU01624.1"/>
    <property type="molecule type" value="Genomic_DNA"/>
</dbReference>
<dbReference type="RefSeq" id="NP_856645.1">
    <property type="nucleotide sequence ID" value="NC_002945.3"/>
</dbReference>
<dbReference type="RefSeq" id="WP_003899565.1">
    <property type="nucleotide sequence ID" value="NC_002945.4"/>
</dbReference>
<dbReference type="SMR" id="P67072"/>
<dbReference type="KEGG" id="mbo:BQ2027_MB3000C"/>
<dbReference type="PATRIC" id="fig|233413.5.peg.3298"/>
<dbReference type="Proteomes" id="UP000001419">
    <property type="component" value="Chromosome"/>
</dbReference>
<dbReference type="GO" id="GO:0005737">
    <property type="term" value="C:cytoplasm"/>
    <property type="evidence" value="ECO:0007669"/>
    <property type="project" value="UniProtKB-SubCell"/>
</dbReference>
<dbReference type="GO" id="GO:0004844">
    <property type="term" value="F:uracil DNA N-glycosylase activity"/>
    <property type="evidence" value="ECO:0007669"/>
    <property type="project" value="UniProtKB-UniRule"/>
</dbReference>
<dbReference type="GO" id="GO:0097510">
    <property type="term" value="P:base-excision repair, AP site formation via deaminated base removal"/>
    <property type="evidence" value="ECO:0007669"/>
    <property type="project" value="TreeGrafter"/>
</dbReference>
<dbReference type="CDD" id="cd10027">
    <property type="entry name" value="UDG-F1-like"/>
    <property type="match status" value="1"/>
</dbReference>
<dbReference type="FunFam" id="3.40.470.10:FF:000006">
    <property type="entry name" value="Uracil-DNA glycosylase"/>
    <property type="match status" value="1"/>
</dbReference>
<dbReference type="Gene3D" id="3.40.470.10">
    <property type="entry name" value="Uracil-DNA glycosylase-like domain"/>
    <property type="match status" value="1"/>
</dbReference>
<dbReference type="HAMAP" id="MF_00148">
    <property type="entry name" value="UDG"/>
    <property type="match status" value="1"/>
</dbReference>
<dbReference type="InterPro" id="IPR002043">
    <property type="entry name" value="UDG_fam1"/>
</dbReference>
<dbReference type="InterPro" id="IPR018085">
    <property type="entry name" value="Ura-DNA_Glyclase_AS"/>
</dbReference>
<dbReference type="InterPro" id="IPR005122">
    <property type="entry name" value="Uracil-DNA_glycosylase-like"/>
</dbReference>
<dbReference type="InterPro" id="IPR036895">
    <property type="entry name" value="Uracil-DNA_glycosylase-like_sf"/>
</dbReference>
<dbReference type="NCBIfam" id="NF003588">
    <property type="entry name" value="PRK05254.1-1"/>
    <property type="match status" value="1"/>
</dbReference>
<dbReference type="NCBIfam" id="NF003592">
    <property type="entry name" value="PRK05254.1-5"/>
    <property type="match status" value="1"/>
</dbReference>
<dbReference type="NCBIfam" id="TIGR00628">
    <property type="entry name" value="ung"/>
    <property type="match status" value="1"/>
</dbReference>
<dbReference type="PANTHER" id="PTHR11264">
    <property type="entry name" value="URACIL-DNA GLYCOSYLASE"/>
    <property type="match status" value="1"/>
</dbReference>
<dbReference type="PANTHER" id="PTHR11264:SF0">
    <property type="entry name" value="URACIL-DNA GLYCOSYLASE"/>
    <property type="match status" value="1"/>
</dbReference>
<dbReference type="Pfam" id="PF03167">
    <property type="entry name" value="UDG"/>
    <property type="match status" value="1"/>
</dbReference>
<dbReference type="SMART" id="SM00986">
    <property type="entry name" value="UDG"/>
    <property type="match status" value="1"/>
</dbReference>
<dbReference type="SMART" id="SM00987">
    <property type="entry name" value="UreE_C"/>
    <property type="match status" value="1"/>
</dbReference>
<dbReference type="SUPFAM" id="SSF52141">
    <property type="entry name" value="Uracil-DNA glycosylase-like"/>
    <property type="match status" value="1"/>
</dbReference>
<dbReference type="PROSITE" id="PS00130">
    <property type="entry name" value="U_DNA_GLYCOSYLASE"/>
    <property type="match status" value="1"/>
</dbReference>
<keyword id="KW-0963">Cytoplasm</keyword>
<keyword id="KW-0227">DNA damage</keyword>
<keyword id="KW-0234">DNA repair</keyword>
<keyword id="KW-0378">Hydrolase</keyword>
<keyword id="KW-1185">Reference proteome</keyword>
<comment type="function">
    <text evidence="1">Excises uracil residues from the DNA which can arise as a result of misincorporation of dUMP residues by DNA polymerase or due to deamination of cytosine.</text>
</comment>
<comment type="catalytic activity">
    <reaction>
        <text>Hydrolyzes single-stranded DNA or mismatched double-stranded DNA and polynucleotides, releasing free uracil.</text>
        <dbReference type="EC" id="3.2.2.27"/>
    </reaction>
</comment>
<comment type="subcellular location">
    <subcellularLocation>
        <location evidence="1">Cytoplasm</location>
    </subcellularLocation>
</comment>
<comment type="similarity">
    <text evidence="2">Belongs to the uracil-DNA glycosylase (UDG) superfamily. UNG family.</text>
</comment>
<sequence>MTARPLSELVERGWAAALEPVADQVAHMGQFLRAEIAAGRRYLPAGSNVLRAFTFPFDNVRVLIVGQDPYPTPGHAVGLSFSVAPDVRPWPRSLANIFDEYTADLGYPLPSNGDLTPWAQRGVLLLNRVLTVRPSNPASHRGKGWEAVTECAIRALAARAAPLVAILWGRDASTLKPMLAAGNCVAIESPHPSPLSASRGFFGSRPFSRANELLVGMGAEPIDWRLP</sequence>
<proteinExistence type="inferred from homology"/>
<organism>
    <name type="scientific">Mycobacterium bovis (strain ATCC BAA-935 / AF2122/97)</name>
    <dbReference type="NCBI Taxonomy" id="233413"/>
    <lineage>
        <taxon>Bacteria</taxon>
        <taxon>Bacillati</taxon>
        <taxon>Actinomycetota</taxon>
        <taxon>Actinomycetes</taxon>
        <taxon>Mycobacteriales</taxon>
        <taxon>Mycobacteriaceae</taxon>
        <taxon>Mycobacterium</taxon>
        <taxon>Mycobacterium tuberculosis complex</taxon>
    </lineage>
</organism>
<evidence type="ECO:0000250" key="1"/>
<evidence type="ECO:0000305" key="2"/>
<name>UNG_MYCBO</name>
<reference key="1">
    <citation type="journal article" date="2003" name="Proc. Natl. Acad. Sci. U.S.A.">
        <title>The complete genome sequence of Mycobacterium bovis.</title>
        <authorList>
            <person name="Garnier T."/>
            <person name="Eiglmeier K."/>
            <person name="Camus J.-C."/>
            <person name="Medina N."/>
            <person name="Mansoor H."/>
            <person name="Pryor M."/>
            <person name="Duthoy S."/>
            <person name="Grondin S."/>
            <person name="Lacroix C."/>
            <person name="Monsempe C."/>
            <person name="Simon S."/>
            <person name="Harris B."/>
            <person name="Atkin R."/>
            <person name="Doggett J."/>
            <person name="Mayes R."/>
            <person name="Keating L."/>
            <person name="Wheeler P.R."/>
            <person name="Parkhill J."/>
            <person name="Barrell B.G."/>
            <person name="Cole S.T."/>
            <person name="Gordon S.V."/>
            <person name="Hewinson R.G."/>
        </authorList>
    </citation>
    <scope>NUCLEOTIDE SEQUENCE [LARGE SCALE GENOMIC DNA]</scope>
    <source>
        <strain>ATCC BAA-935 / AF2122/97</strain>
    </source>
</reference>
<reference key="2">
    <citation type="journal article" date="2017" name="Genome Announc.">
        <title>Updated reference genome sequence and annotation of Mycobacterium bovis AF2122/97.</title>
        <authorList>
            <person name="Malone K.M."/>
            <person name="Farrell D."/>
            <person name="Stuber T.P."/>
            <person name="Schubert O.T."/>
            <person name="Aebersold R."/>
            <person name="Robbe-Austerman S."/>
            <person name="Gordon S.V."/>
        </authorList>
    </citation>
    <scope>NUCLEOTIDE SEQUENCE [LARGE SCALE GENOMIC DNA]</scope>
    <scope>GENOME REANNOTATION</scope>
    <source>
        <strain>ATCC BAA-935 / AF2122/97</strain>
    </source>
</reference>
<accession>P67072</accession>
<accession>A0A1R3Y2S3</accession>
<accession>P95119</accession>
<accession>X2BMD5</accession>
<feature type="chain" id="PRO_0000176120" description="Uracil-DNA glycosylase">
    <location>
        <begin position="1"/>
        <end position="227"/>
    </location>
</feature>
<feature type="active site" description="Proton acceptor" evidence="1">
    <location>
        <position position="68"/>
    </location>
</feature>
<protein>
    <recommendedName>
        <fullName>Uracil-DNA glycosylase</fullName>
        <shortName>UDG</shortName>
        <ecNumber>3.2.2.27</ecNumber>
    </recommendedName>
</protein>
<gene>
    <name type="primary">ung</name>
    <name type="ordered locus">BQ2027_MB3000C</name>
</gene>